<sequence length="187" mass="20422">MIAEAMAQEPGSELISETQVPDAEHAGGFPPFDAASFESQLVWLVLSFAALYLLMSRVALPRIANVLEERRDRIADDLDQAAQFQLQTEEAIGAYEKALAEARAKAQGIAQETRDRLQEETERQRLAIEARLAEKISEAEKQIAATKDAALQNVRAVAVDVADTIVAQLLGDSDRSATERAVDTELS</sequence>
<dbReference type="EMBL" id="CP000774">
    <property type="protein sequence ID" value="ABS62318.1"/>
    <property type="molecule type" value="Genomic_DNA"/>
</dbReference>
<dbReference type="RefSeq" id="WP_011995609.1">
    <property type="nucleotide sequence ID" value="NC_009719.1"/>
</dbReference>
<dbReference type="SMR" id="A7HQY5"/>
<dbReference type="STRING" id="402881.Plav_0695"/>
<dbReference type="KEGG" id="pla:Plav_0695"/>
<dbReference type="eggNOG" id="COG0711">
    <property type="taxonomic scope" value="Bacteria"/>
</dbReference>
<dbReference type="HOGENOM" id="CLU_079215_1_2_5"/>
<dbReference type="OrthoDB" id="9805716at2"/>
<dbReference type="Proteomes" id="UP000006377">
    <property type="component" value="Chromosome"/>
</dbReference>
<dbReference type="GO" id="GO:0005886">
    <property type="term" value="C:plasma membrane"/>
    <property type="evidence" value="ECO:0007669"/>
    <property type="project" value="UniProtKB-SubCell"/>
</dbReference>
<dbReference type="GO" id="GO:0045259">
    <property type="term" value="C:proton-transporting ATP synthase complex"/>
    <property type="evidence" value="ECO:0007669"/>
    <property type="project" value="UniProtKB-KW"/>
</dbReference>
<dbReference type="GO" id="GO:0046933">
    <property type="term" value="F:proton-transporting ATP synthase activity, rotational mechanism"/>
    <property type="evidence" value="ECO:0007669"/>
    <property type="project" value="UniProtKB-UniRule"/>
</dbReference>
<dbReference type="GO" id="GO:0046961">
    <property type="term" value="F:proton-transporting ATPase activity, rotational mechanism"/>
    <property type="evidence" value="ECO:0007669"/>
    <property type="project" value="TreeGrafter"/>
</dbReference>
<dbReference type="CDD" id="cd06503">
    <property type="entry name" value="ATP-synt_Fo_b"/>
    <property type="match status" value="1"/>
</dbReference>
<dbReference type="Gene3D" id="6.10.250.1580">
    <property type="match status" value="1"/>
</dbReference>
<dbReference type="HAMAP" id="MF_01398">
    <property type="entry name" value="ATP_synth_b_bprime"/>
    <property type="match status" value="1"/>
</dbReference>
<dbReference type="InterPro" id="IPR002146">
    <property type="entry name" value="ATP_synth_b/b'su_bac/chlpt"/>
</dbReference>
<dbReference type="InterPro" id="IPR050059">
    <property type="entry name" value="ATP_synthase_B_chain"/>
</dbReference>
<dbReference type="NCBIfam" id="NF006612">
    <property type="entry name" value="PRK09174.1"/>
    <property type="match status" value="1"/>
</dbReference>
<dbReference type="PANTHER" id="PTHR33445:SF1">
    <property type="entry name" value="ATP SYNTHASE SUBUNIT B"/>
    <property type="match status" value="1"/>
</dbReference>
<dbReference type="PANTHER" id="PTHR33445">
    <property type="entry name" value="ATP SYNTHASE SUBUNIT B', CHLOROPLASTIC"/>
    <property type="match status" value="1"/>
</dbReference>
<dbReference type="Pfam" id="PF00430">
    <property type="entry name" value="ATP-synt_B"/>
    <property type="match status" value="1"/>
</dbReference>
<gene>
    <name evidence="1" type="primary">atpF2</name>
    <name type="ordered locus">Plav_0695</name>
</gene>
<name>ATPF2_PARL1</name>
<reference key="1">
    <citation type="journal article" date="2011" name="Stand. Genomic Sci.">
        <title>Complete genome sequence of Parvibaculum lavamentivorans type strain (DS-1(T)).</title>
        <authorList>
            <person name="Schleheck D."/>
            <person name="Weiss M."/>
            <person name="Pitluck S."/>
            <person name="Bruce D."/>
            <person name="Land M.L."/>
            <person name="Han S."/>
            <person name="Saunders E."/>
            <person name="Tapia R."/>
            <person name="Detter C."/>
            <person name="Brettin T."/>
            <person name="Han J."/>
            <person name="Woyke T."/>
            <person name="Goodwin L."/>
            <person name="Pennacchio L."/>
            <person name="Nolan M."/>
            <person name="Cook A.M."/>
            <person name="Kjelleberg S."/>
            <person name="Thomas T."/>
        </authorList>
    </citation>
    <scope>NUCLEOTIDE SEQUENCE [LARGE SCALE GENOMIC DNA]</scope>
    <source>
        <strain>DS-1 / DSM 13023 / NCIMB 13966</strain>
    </source>
</reference>
<organism>
    <name type="scientific">Parvibaculum lavamentivorans (strain DS-1 / DSM 13023 / NCIMB 13966)</name>
    <dbReference type="NCBI Taxonomy" id="402881"/>
    <lineage>
        <taxon>Bacteria</taxon>
        <taxon>Pseudomonadati</taxon>
        <taxon>Pseudomonadota</taxon>
        <taxon>Alphaproteobacteria</taxon>
        <taxon>Hyphomicrobiales</taxon>
        <taxon>Parvibaculaceae</taxon>
        <taxon>Parvibaculum</taxon>
    </lineage>
</organism>
<protein>
    <recommendedName>
        <fullName evidence="1">ATP synthase subunit b 2</fullName>
    </recommendedName>
    <alternativeName>
        <fullName evidence="1">ATP synthase F(0) sector subunit b 2</fullName>
    </alternativeName>
    <alternativeName>
        <fullName evidence="1">ATPase subunit I 2</fullName>
    </alternativeName>
    <alternativeName>
        <fullName evidence="1">F-type ATPase subunit b 2</fullName>
        <shortName evidence="1">F-ATPase subunit b 2</shortName>
    </alternativeName>
</protein>
<proteinExistence type="inferred from homology"/>
<evidence type="ECO:0000255" key="1">
    <source>
        <dbReference type="HAMAP-Rule" id="MF_01398"/>
    </source>
</evidence>
<comment type="function">
    <text evidence="1">F(1)F(0) ATP synthase produces ATP from ADP in the presence of a proton or sodium gradient. F-type ATPases consist of two structural domains, F(1) containing the extramembraneous catalytic core and F(0) containing the membrane proton channel, linked together by a central stalk and a peripheral stalk. During catalysis, ATP synthesis in the catalytic domain of F(1) is coupled via a rotary mechanism of the central stalk subunits to proton translocation.</text>
</comment>
<comment type="function">
    <text evidence="1">Component of the F(0) channel, it forms part of the peripheral stalk, linking F(1) to F(0).</text>
</comment>
<comment type="subunit">
    <text evidence="1">F-type ATPases have 2 components, F(1) - the catalytic core - and F(0) - the membrane proton channel. F(1) has five subunits: alpha(3), beta(3), gamma(1), delta(1), epsilon(1). F(0) has three main subunits: a(1), b(2) and c(10-14). The alpha and beta chains form an alternating ring which encloses part of the gamma chain. F(1) is attached to F(0) by a central stalk formed by the gamma and epsilon chains, while a peripheral stalk is formed by the delta and b chains.</text>
</comment>
<comment type="subcellular location">
    <subcellularLocation>
        <location evidence="1">Cell inner membrane</location>
        <topology evidence="1">Single-pass membrane protein</topology>
    </subcellularLocation>
</comment>
<comment type="similarity">
    <text evidence="1">Belongs to the ATPase B chain family.</text>
</comment>
<accession>A7HQY5</accession>
<keyword id="KW-0066">ATP synthesis</keyword>
<keyword id="KW-0997">Cell inner membrane</keyword>
<keyword id="KW-1003">Cell membrane</keyword>
<keyword id="KW-0138">CF(0)</keyword>
<keyword id="KW-0375">Hydrogen ion transport</keyword>
<keyword id="KW-0406">Ion transport</keyword>
<keyword id="KW-0472">Membrane</keyword>
<keyword id="KW-1185">Reference proteome</keyword>
<keyword id="KW-0812">Transmembrane</keyword>
<keyword id="KW-1133">Transmembrane helix</keyword>
<keyword id="KW-0813">Transport</keyword>
<feature type="chain" id="PRO_0000368644" description="ATP synthase subunit b 2">
    <location>
        <begin position="1"/>
        <end position="187"/>
    </location>
</feature>
<feature type="transmembrane region" description="Helical" evidence="1">
    <location>
        <begin position="39"/>
        <end position="61"/>
    </location>
</feature>